<keyword id="KW-0460">Magnesium</keyword>
<keyword id="KW-0464">Manganese</keyword>
<keyword id="KW-0479">Metal-binding</keyword>
<keyword id="KW-1185">Reference proteome</keyword>
<keyword id="KW-0786">Thiamine pyrophosphate</keyword>
<keyword id="KW-0808">Transferase</keyword>
<feature type="chain" id="PRO_0000341693" description="2-succinyl-5-enolpyruvyl-6-hydroxy-3-cyclohexene-1-carboxylate synthase">
    <location>
        <begin position="1"/>
        <end position="586"/>
    </location>
</feature>
<accession>B0C1Y1</accession>
<protein>
    <recommendedName>
        <fullName evidence="1">2-succinyl-5-enolpyruvyl-6-hydroxy-3-cyclohexene-1-carboxylate synthase</fullName>
        <shortName evidence="1">SEPHCHC synthase</shortName>
        <ecNumber evidence="1">2.2.1.9</ecNumber>
    </recommendedName>
</protein>
<sequence length="586" mass="65165">MTLDFRNVNMLWSSIIAETLSRLGLTTAIICPGSRSGPLAVAFAQHPDIEAIPVLDERSAAFFGLGIARRKGLPVVLVCTSGTAGANFYPAVIEAEASGVPLLLLTADRPPELRHCQAGQAIDQVKLYGHYPRWQVELALPSTHPEMLAYLRQTCVYAWEQSQRPVPGPVHLNIPFRDPLAPISDLETESLAATFDIDQFFAAVHPLPSVQISLDLQTTNVYLDQWMSCDRGLIIAGPAQPDTPEHYCLAIAQLAHILGWPVLAEGLSPLRNWADRNSYLISTYDLILRNPTIASQLQPQQVISIGALPTSKVLRVWLTQSRAQTWVVDVSDHNMDPLHGLSIPVRISVEGLITSIPAAKKEHCQPLTAYAKSWLNANHSVRTLINRAMQKQSELIESKIAWLLSQILPPRTPLFIANSMPVRDIEYFWQPGTLHIQPYFNRGANGIDGTLSTALGMSHRQQSSVLLTGDLALLHDTNGFLLQDYWQGHLTIIVVNNGGGGIFQMLPISAFDPPFERFFRTPQQVQLKHLAATYQAKWTLIQSWAHLQQALNPLPESGLHILEISCDCQNDTQWRRIFFKECVKSL</sequence>
<comment type="function">
    <text evidence="1">Catalyzes the thiamine diphosphate-dependent decarboxylation of 2-oxoglutarate and the subsequent addition of the resulting succinic semialdehyde-thiamine pyrophosphate anion to isochorismate to yield 2-succinyl-5-enolpyruvyl-6-hydroxy-3-cyclohexene-1-carboxylate (SEPHCHC).</text>
</comment>
<comment type="catalytic activity">
    <reaction evidence="1">
        <text>isochorismate + 2-oxoglutarate + H(+) = 5-enolpyruvoyl-6-hydroxy-2-succinyl-cyclohex-3-ene-1-carboxylate + CO2</text>
        <dbReference type="Rhea" id="RHEA:25593"/>
        <dbReference type="ChEBI" id="CHEBI:15378"/>
        <dbReference type="ChEBI" id="CHEBI:16526"/>
        <dbReference type="ChEBI" id="CHEBI:16810"/>
        <dbReference type="ChEBI" id="CHEBI:29780"/>
        <dbReference type="ChEBI" id="CHEBI:58818"/>
        <dbReference type="EC" id="2.2.1.9"/>
    </reaction>
</comment>
<comment type="cofactor">
    <cofactor evidence="1">
        <name>Mg(2+)</name>
        <dbReference type="ChEBI" id="CHEBI:18420"/>
    </cofactor>
    <cofactor evidence="1">
        <name>Mn(2+)</name>
        <dbReference type="ChEBI" id="CHEBI:29035"/>
    </cofactor>
</comment>
<comment type="cofactor">
    <cofactor evidence="1">
        <name>thiamine diphosphate</name>
        <dbReference type="ChEBI" id="CHEBI:58937"/>
    </cofactor>
    <text evidence="1">Binds 1 thiamine pyrophosphate per subunit.</text>
</comment>
<comment type="pathway">
    <text evidence="1">Quinol/quinone metabolism; 1,4-dihydroxy-2-naphthoate biosynthesis; 1,4-dihydroxy-2-naphthoate from chorismate: step 2/7.</text>
</comment>
<comment type="pathway">
    <text evidence="1">Cofactor biosynthesis; phylloquinone biosynthesis.</text>
</comment>
<comment type="subunit">
    <text evidence="1">Homodimer.</text>
</comment>
<comment type="similarity">
    <text evidence="1">Belongs to the TPP enzyme family. MenD subfamily.</text>
</comment>
<evidence type="ECO:0000255" key="1">
    <source>
        <dbReference type="HAMAP-Rule" id="MF_01659"/>
    </source>
</evidence>
<reference key="1">
    <citation type="journal article" date="2008" name="Proc. Natl. Acad. Sci. U.S.A.">
        <title>Niche adaptation and genome expansion in the chlorophyll d-producing cyanobacterium Acaryochloris marina.</title>
        <authorList>
            <person name="Swingley W.D."/>
            <person name="Chen M."/>
            <person name="Cheung P.C."/>
            <person name="Conrad A.L."/>
            <person name="Dejesa L.C."/>
            <person name="Hao J."/>
            <person name="Honchak B.M."/>
            <person name="Karbach L.E."/>
            <person name="Kurdoglu A."/>
            <person name="Lahiri S."/>
            <person name="Mastrian S.D."/>
            <person name="Miyashita H."/>
            <person name="Page L."/>
            <person name="Ramakrishna P."/>
            <person name="Satoh S."/>
            <person name="Sattley W.M."/>
            <person name="Shimada Y."/>
            <person name="Taylor H.L."/>
            <person name="Tomo T."/>
            <person name="Tsuchiya T."/>
            <person name="Wang Z.T."/>
            <person name="Raymond J."/>
            <person name="Mimuro M."/>
            <person name="Blankenship R.E."/>
            <person name="Touchman J.W."/>
        </authorList>
    </citation>
    <scope>NUCLEOTIDE SEQUENCE [LARGE SCALE GENOMIC DNA]</scope>
    <source>
        <strain>MBIC 11017</strain>
    </source>
</reference>
<organism>
    <name type="scientific">Acaryochloris marina (strain MBIC 11017)</name>
    <dbReference type="NCBI Taxonomy" id="329726"/>
    <lineage>
        <taxon>Bacteria</taxon>
        <taxon>Bacillati</taxon>
        <taxon>Cyanobacteriota</taxon>
        <taxon>Cyanophyceae</taxon>
        <taxon>Acaryochloridales</taxon>
        <taxon>Acaryochloridaceae</taxon>
        <taxon>Acaryochloris</taxon>
    </lineage>
</organism>
<name>MEND_ACAM1</name>
<proteinExistence type="inferred from homology"/>
<gene>
    <name evidence="1" type="primary">menD</name>
    <name type="ordered locus">AM1_1108</name>
</gene>
<dbReference type="EC" id="2.2.1.9" evidence="1"/>
<dbReference type="EMBL" id="CP000828">
    <property type="protein sequence ID" value="ABW26147.1"/>
    <property type="molecule type" value="Genomic_DNA"/>
</dbReference>
<dbReference type="RefSeq" id="WP_012161701.1">
    <property type="nucleotide sequence ID" value="NC_009925.1"/>
</dbReference>
<dbReference type="SMR" id="B0C1Y1"/>
<dbReference type="STRING" id="329726.AM1_1108"/>
<dbReference type="KEGG" id="amr:AM1_1108"/>
<dbReference type="eggNOG" id="COG1165">
    <property type="taxonomic scope" value="Bacteria"/>
</dbReference>
<dbReference type="HOGENOM" id="CLU_006051_3_0_3"/>
<dbReference type="OrthoDB" id="9791859at2"/>
<dbReference type="UniPathway" id="UPA00995"/>
<dbReference type="UniPathway" id="UPA01057">
    <property type="reaction ID" value="UER00164"/>
</dbReference>
<dbReference type="Proteomes" id="UP000000268">
    <property type="component" value="Chromosome"/>
</dbReference>
<dbReference type="GO" id="GO:0070204">
    <property type="term" value="F:2-succinyl-5-enolpyruvyl-6-hydroxy-3-cyclohexene-1-carboxylic-acid synthase activity"/>
    <property type="evidence" value="ECO:0007669"/>
    <property type="project" value="UniProtKB-UniRule"/>
</dbReference>
<dbReference type="GO" id="GO:0000287">
    <property type="term" value="F:magnesium ion binding"/>
    <property type="evidence" value="ECO:0007669"/>
    <property type="project" value="UniProtKB-UniRule"/>
</dbReference>
<dbReference type="GO" id="GO:0030145">
    <property type="term" value="F:manganese ion binding"/>
    <property type="evidence" value="ECO:0007669"/>
    <property type="project" value="UniProtKB-UniRule"/>
</dbReference>
<dbReference type="GO" id="GO:0030976">
    <property type="term" value="F:thiamine pyrophosphate binding"/>
    <property type="evidence" value="ECO:0007669"/>
    <property type="project" value="UniProtKB-UniRule"/>
</dbReference>
<dbReference type="GO" id="GO:0009234">
    <property type="term" value="P:menaquinone biosynthetic process"/>
    <property type="evidence" value="ECO:0007669"/>
    <property type="project" value="InterPro"/>
</dbReference>
<dbReference type="GO" id="GO:0042372">
    <property type="term" value="P:phylloquinone biosynthetic process"/>
    <property type="evidence" value="ECO:0007669"/>
    <property type="project" value="UniProtKB-UniRule"/>
</dbReference>
<dbReference type="CDD" id="cd07037">
    <property type="entry name" value="TPP_PYR_MenD"/>
    <property type="match status" value="1"/>
</dbReference>
<dbReference type="CDD" id="cd02009">
    <property type="entry name" value="TPP_SHCHC_synthase"/>
    <property type="match status" value="1"/>
</dbReference>
<dbReference type="Gene3D" id="3.40.50.970">
    <property type="match status" value="2"/>
</dbReference>
<dbReference type="Gene3D" id="3.40.50.1220">
    <property type="entry name" value="TPP-binding domain"/>
    <property type="match status" value="1"/>
</dbReference>
<dbReference type="HAMAP" id="MF_01659">
    <property type="entry name" value="MenD"/>
    <property type="match status" value="1"/>
</dbReference>
<dbReference type="InterPro" id="IPR004433">
    <property type="entry name" value="MenaQ_synth_MenD"/>
</dbReference>
<dbReference type="InterPro" id="IPR032264">
    <property type="entry name" value="MenD_middle"/>
</dbReference>
<dbReference type="InterPro" id="IPR029061">
    <property type="entry name" value="THDP-binding"/>
</dbReference>
<dbReference type="InterPro" id="IPR012001">
    <property type="entry name" value="Thiamin_PyroP_enz_TPP-bd_dom"/>
</dbReference>
<dbReference type="NCBIfam" id="TIGR00173">
    <property type="entry name" value="menD"/>
    <property type="match status" value="1"/>
</dbReference>
<dbReference type="PANTHER" id="PTHR42916">
    <property type="entry name" value="2-SUCCINYL-5-ENOLPYRUVYL-6-HYDROXY-3-CYCLOHEXENE-1-CARBOXYLATE SYNTHASE"/>
    <property type="match status" value="1"/>
</dbReference>
<dbReference type="PANTHER" id="PTHR42916:SF1">
    <property type="entry name" value="PROTEIN PHYLLO, CHLOROPLASTIC"/>
    <property type="match status" value="1"/>
</dbReference>
<dbReference type="Pfam" id="PF16582">
    <property type="entry name" value="TPP_enzyme_M_2"/>
    <property type="match status" value="1"/>
</dbReference>
<dbReference type="Pfam" id="PF02776">
    <property type="entry name" value="TPP_enzyme_N"/>
    <property type="match status" value="1"/>
</dbReference>
<dbReference type="PIRSF" id="PIRSF004983">
    <property type="entry name" value="MenD"/>
    <property type="match status" value="1"/>
</dbReference>
<dbReference type="SUPFAM" id="SSF52518">
    <property type="entry name" value="Thiamin diphosphate-binding fold (THDP-binding)"/>
    <property type="match status" value="2"/>
</dbReference>